<reference key="1">
    <citation type="journal article" date="2009" name="BMC Genomics">
        <title>Analysis of the Rickettsia africae genome reveals that virulence acquisition in Rickettsia species may be explained by genome reduction.</title>
        <authorList>
            <person name="Fournier P.-E."/>
            <person name="El Karkouri K."/>
            <person name="Leroy Q."/>
            <person name="Robert C."/>
            <person name="Giumelli B."/>
            <person name="Renesto P."/>
            <person name="Socolovschi C."/>
            <person name="Parola P."/>
            <person name="Audic S."/>
            <person name="Raoult D."/>
        </authorList>
    </citation>
    <scope>NUCLEOTIDE SEQUENCE [LARGE SCALE GENOMIC DNA]</scope>
    <source>
        <strain>ESF-5</strain>
    </source>
</reference>
<dbReference type="EMBL" id="CP001612">
    <property type="protein sequence ID" value="ACP53476.1"/>
    <property type="molecule type" value="Genomic_DNA"/>
</dbReference>
<dbReference type="RefSeq" id="WP_012719694.1">
    <property type="nucleotide sequence ID" value="NC_012633.1"/>
</dbReference>
<dbReference type="SMR" id="C3PNG6"/>
<dbReference type="KEGG" id="raf:RAF_ORF0567"/>
<dbReference type="HOGENOM" id="CLU_089475_1_0_5"/>
<dbReference type="Proteomes" id="UP000002305">
    <property type="component" value="Chromosome"/>
</dbReference>
<dbReference type="GO" id="GO:0005829">
    <property type="term" value="C:cytosol"/>
    <property type="evidence" value="ECO:0007669"/>
    <property type="project" value="TreeGrafter"/>
</dbReference>
<dbReference type="GO" id="GO:0043024">
    <property type="term" value="F:ribosomal small subunit binding"/>
    <property type="evidence" value="ECO:0007669"/>
    <property type="project" value="TreeGrafter"/>
</dbReference>
<dbReference type="GO" id="GO:0030490">
    <property type="term" value="P:maturation of SSU-rRNA"/>
    <property type="evidence" value="ECO:0007669"/>
    <property type="project" value="UniProtKB-UniRule"/>
</dbReference>
<dbReference type="Gene3D" id="3.30.300.20">
    <property type="match status" value="1"/>
</dbReference>
<dbReference type="HAMAP" id="MF_00003">
    <property type="entry name" value="RbfA"/>
    <property type="match status" value="1"/>
</dbReference>
<dbReference type="InterPro" id="IPR015946">
    <property type="entry name" value="KH_dom-like_a/b"/>
</dbReference>
<dbReference type="InterPro" id="IPR000238">
    <property type="entry name" value="RbfA"/>
</dbReference>
<dbReference type="InterPro" id="IPR023799">
    <property type="entry name" value="RbfA_dom_sf"/>
</dbReference>
<dbReference type="InterPro" id="IPR020053">
    <property type="entry name" value="Ribosome-bd_factorA_CS"/>
</dbReference>
<dbReference type="NCBIfam" id="NF001799">
    <property type="entry name" value="PRK00521.2-2"/>
    <property type="match status" value="1"/>
</dbReference>
<dbReference type="NCBIfam" id="TIGR00082">
    <property type="entry name" value="rbfA"/>
    <property type="match status" value="1"/>
</dbReference>
<dbReference type="PANTHER" id="PTHR33515">
    <property type="entry name" value="RIBOSOME-BINDING FACTOR A, CHLOROPLASTIC-RELATED"/>
    <property type="match status" value="1"/>
</dbReference>
<dbReference type="PANTHER" id="PTHR33515:SF1">
    <property type="entry name" value="RIBOSOME-BINDING FACTOR A, CHLOROPLASTIC-RELATED"/>
    <property type="match status" value="1"/>
</dbReference>
<dbReference type="Pfam" id="PF02033">
    <property type="entry name" value="RBFA"/>
    <property type="match status" value="1"/>
</dbReference>
<dbReference type="SUPFAM" id="SSF89919">
    <property type="entry name" value="Ribosome-binding factor A, RbfA"/>
    <property type="match status" value="1"/>
</dbReference>
<dbReference type="PROSITE" id="PS01319">
    <property type="entry name" value="RBFA"/>
    <property type="match status" value="1"/>
</dbReference>
<feature type="chain" id="PRO_1000201650" description="Ribosome-binding factor A">
    <location>
        <begin position="1"/>
        <end position="120"/>
    </location>
</feature>
<accession>C3PNG6</accession>
<proteinExistence type="inferred from homology"/>
<gene>
    <name evidence="1" type="primary">rbfA</name>
    <name type="ordered locus">RAF_ORF0567</name>
</gene>
<comment type="function">
    <text evidence="1">One of several proteins that assist in the late maturation steps of the functional core of the 30S ribosomal subunit. Associates with free 30S ribosomal subunits (but not with 30S subunits that are part of 70S ribosomes or polysomes). Required for efficient processing of 16S rRNA. May interact with the 5'-terminal helix region of 16S rRNA.</text>
</comment>
<comment type="subunit">
    <text evidence="1">Monomer. Binds 30S ribosomal subunits, but not 50S ribosomal subunits or 70S ribosomes.</text>
</comment>
<comment type="subcellular location">
    <subcellularLocation>
        <location evidence="1">Cytoplasm</location>
    </subcellularLocation>
</comment>
<comment type="similarity">
    <text evidence="1">Belongs to the RbfA family.</text>
</comment>
<protein>
    <recommendedName>
        <fullName evidence="1">Ribosome-binding factor A</fullName>
    </recommendedName>
</protein>
<sequence length="120" mass="13939">MKKLTKTHSHRQQKLASIINEALIEILRRGKMLDTRLFDCPLTITKVIVTADLKIANCYFLPFNTKLTIDEIMDALNNSKNAIRNFITNKINMKFSPDIRFYYDHGFDNAIKVAHLLKDL</sequence>
<name>RBFA_RICAE</name>
<evidence type="ECO:0000255" key="1">
    <source>
        <dbReference type="HAMAP-Rule" id="MF_00003"/>
    </source>
</evidence>
<keyword id="KW-0963">Cytoplasm</keyword>
<keyword id="KW-0690">Ribosome biogenesis</keyword>
<organism>
    <name type="scientific">Rickettsia africae (strain ESF-5)</name>
    <dbReference type="NCBI Taxonomy" id="347255"/>
    <lineage>
        <taxon>Bacteria</taxon>
        <taxon>Pseudomonadati</taxon>
        <taxon>Pseudomonadota</taxon>
        <taxon>Alphaproteobacteria</taxon>
        <taxon>Rickettsiales</taxon>
        <taxon>Rickettsiaceae</taxon>
        <taxon>Rickettsieae</taxon>
        <taxon>Rickettsia</taxon>
        <taxon>spotted fever group</taxon>
    </lineage>
</organism>